<protein>
    <recommendedName>
        <fullName>U-box domain-containing protein 41</fullName>
        <ecNumber>2.3.2.27</ecNumber>
    </recommendedName>
    <alternativeName>
        <fullName>Plant U-box protein 41</fullName>
    </alternativeName>
    <alternativeName>
        <fullName evidence="3">RING-type E3 ubiquitin transferase PUB41</fullName>
    </alternativeName>
</protein>
<proteinExistence type="evidence at transcript level"/>
<name>PUB41_ARATH</name>
<evidence type="ECO:0000250" key="1"/>
<evidence type="ECO:0000256" key="2">
    <source>
        <dbReference type="SAM" id="MobiDB-lite"/>
    </source>
</evidence>
<evidence type="ECO:0000305" key="3"/>
<organism>
    <name type="scientific">Arabidopsis thaliana</name>
    <name type="common">Mouse-ear cress</name>
    <dbReference type="NCBI Taxonomy" id="3702"/>
    <lineage>
        <taxon>Eukaryota</taxon>
        <taxon>Viridiplantae</taxon>
        <taxon>Streptophyta</taxon>
        <taxon>Embryophyta</taxon>
        <taxon>Tracheophyta</taxon>
        <taxon>Spermatophyta</taxon>
        <taxon>Magnoliopsida</taxon>
        <taxon>eudicotyledons</taxon>
        <taxon>Gunneridae</taxon>
        <taxon>Pentapetalae</taxon>
        <taxon>rosids</taxon>
        <taxon>malvids</taxon>
        <taxon>Brassicales</taxon>
        <taxon>Brassicaceae</taxon>
        <taxon>Camelineae</taxon>
        <taxon>Arabidopsis</taxon>
    </lineage>
</organism>
<feature type="chain" id="PRO_0000322181" description="U-box domain-containing protein 41">
    <location>
        <begin position="1"/>
        <end position="559"/>
    </location>
</feature>
<feature type="domain" description="U-box">
    <location>
        <begin position="30"/>
        <end position="104"/>
    </location>
</feature>
<feature type="repeat" description="ARM 1">
    <location>
        <begin position="266"/>
        <end position="305"/>
    </location>
</feature>
<feature type="repeat" description="ARM 2">
    <location>
        <begin position="307"/>
        <end position="346"/>
    </location>
</feature>
<feature type="repeat" description="ARM 3">
    <location>
        <begin position="348"/>
        <end position="388"/>
    </location>
</feature>
<feature type="repeat" description="ARM 4">
    <location>
        <begin position="390"/>
        <end position="427"/>
    </location>
</feature>
<feature type="repeat" description="ARM 5">
    <location>
        <begin position="428"/>
        <end position="472"/>
    </location>
</feature>
<feature type="region of interest" description="Disordered" evidence="2">
    <location>
        <begin position="1"/>
        <end position="30"/>
    </location>
</feature>
<feature type="region of interest" description="Disordered" evidence="2">
    <location>
        <begin position="121"/>
        <end position="156"/>
    </location>
</feature>
<feature type="compositionally biased region" description="Polar residues" evidence="2">
    <location>
        <begin position="12"/>
        <end position="24"/>
    </location>
</feature>
<feature type="sequence conflict" description="In Ref. 3; AAM91572/AAN15670." evidence="3" ref="3">
    <original>NK</original>
    <variation>KR</variation>
    <location>
        <begin position="4"/>
        <end position="5"/>
    </location>
</feature>
<reference key="1">
    <citation type="journal article" date="1998" name="DNA Res.">
        <title>Structural analysis of Arabidopsis thaliana chromosome 5. VII. Sequence features of the regions of 1,013,767 bp covered by sixteen physically assigned P1 and TAC clones.</title>
        <authorList>
            <person name="Nakamura Y."/>
            <person name="Sato S."/>
            <person name="Asamizu E."/>
            <person name="Kaneko T."/>
            <person name="Kotani H."/>
            <person name="Miyajima N."/>
            <person name="Tabata S."/>
        </authorList>
    </citation>
    <scope>NUCLEOTIDE SEQUENCE [LARGE SCALE GENOMIC DNA]</scope>
    <source>
        <strain>cv. Columbia</strain>
    </source>
</reference>
<reference key="2">
    <citation type="journal article" date="2017" name="Plant J.">
        <title>Araport11: a complete reannotation of the Arabidopsis thaliana reference genome.</title>
        <authorList>
            <person name="Cheng C.Y."/>
            <person name="Krishnakumar V."/>
            <person name="Chan A.P."/>
            <person name="Thibaud-Nissen F."/>
            <person name="Schobel S."/>
            <person name="Town C.D."/>
        </authorList>
    </citation>
    <scope>GENOME REANNOTATION</scope>
    <source>
        <strain>cv. Columbia</strain>
    </source>
</reference>
<reference key="3">
    <citation type="journal article" date="2003" name="Science">
        <title>Empirical analysis of transcriptional activity in the Arabidopsis genome.</title>
        <authorList>
            <person name="Yamada K."/>
            <person name="Lim J."/>
            <person name="Dale J.M."/>
            <person name="Chen H."/>
            <person name="Shinn P."/>
            <person name="Palm C.J."/>
            <person name="Southwick A.M."/>
            <person name="Wu H.C."/>
            <person name="Kim C.J."/>
            <person name="Nguyen M."/>
            <person name="Pham P.K."/>
            <person name="Cheuk R.F."/>
            <person name="Karlin-Newmann G."/>
            <person name="Liu S.X."/>
            <person name="Lam B."/>
            <person name="Sakano H."/>
            <person name="Wu T."/>
            <person name="Yu G."/>
            <person name="Miranda M."/>
            <person name="Quach H.L."/>
            <person name="Tripp M."/>
            <person name="Chang C.H."/>
            <person name="Lee J.M."/>
            <person name="Toriumi M.J."/>
            <person name="Chan M.M."/>
            <person name="Tang C.C."/>
            <person name="Onodera C.S."/>
            <person name="Deng J.M."/>
            <person name="Akiyama K."/>
            <person name="Ansari Y."/>
            <person name="Arakawa T."/>
            <person name="Banh J."/>
            <person name="Banno F."/>
            <person name="Bowser L."/>
            <person name="Brooks S.Y."/>
            <person name="Carninci P."/>
            <person name="Chao Q."/>
            <person name="Choy N."/>
            <person name="Enju A."/>
            <person name="Goldsmith A.D."/>
            <person name="Gurjal M."/>
            <person name="Hansen N.F."/>
            <person name="Hayashizaki Y."/>
            <person name="Johnson-Hopson C."/>
            <person name="Hsuan V.W."/>
            <person name="Iida K."/>
            <person name="Karnes M."/>
            <person name="Khan S."/>
            <person name="Koesema E."/>
            <person name="Ishida J."/>
            <person name="Jiang P.X."/>
            <person name="Jones T."/>
            <person name="Kawai J."/>
            <person name="Kamiya A."/>
            <person name="Meyers C."/>
            <person name="Nakajima M."/>
            <person name="Narusaka M."/>
            <person name="Seki M."/>
            <person name="Sakurai T."/>
            <person name="Satou M."/>
            <person name="Tamse R."/>
            <person name="Vaysberg M."/>
            <person name="Wallender E.K."/>
            <person name="Wong C."/>
            <person name="Yamamura Y."/>
            <person name="Yuan S."/>
            <person name="Shinozaki K."/>
            <person name="Davis R.W."/>
            <person name="Theologis A."/>
            <person name="Ecker J.R."/>
        </authorList>
    </citation>
    <scope>NUCLEOTIDE SEQUENCE [LARGE SCALE MRNA]</scope>
    <source>
        <strain>cv. Columbia</strain>
    </source>
</reference>
<reference key="4">
    <citation type="submission" date="2006-07" db="EMBL/GenBank/DDBJ databases">
        <title>Large-scale analysis of RIKEN Arabidopsis full-length (RAFL) cDNAs.</title>
        <authorList>
            <person name="Totoki Y."/>
            <person name="Seki M."/>
            <person name="Ishida J."/>
            <person name="Nakajima M."/>
            <person name="Enju A."/>
            <person name="Kamiya A."/>
            <person name="Narusaka M."/>
            <person name="Shin-i T."/>
            <person name="Nakagawa M."/>
            <person name="Sakamoto N."/>
            <person name="Oishi K."/>
            <person name="Kohara Y."/>
            <person name="Kobayashi M."/>
            <person name="Toyoda A."/>
            <person name="Sakaki Y."/>
            <person name="Sakurai T."/>
            <person name="Iida K."/>
            <person name="Akiyama K."/>
            <person name="Satou M."/>
            <person name="Toyoda T."/>
            <person name="Konagaya A."/>
            <person name="Carninci P."/>
            <person name="Kawai J."/>
            <person name="Hayashizaki Y."/>
            <person name="Shinozaki K."/>
        </authorList>
    </citation>
    <scope>NUCLEOTIDE SEQUENCE [LARGE SCALE MRNA]</scope>
    <source>
        <strain>cv. Columbia</strain>
    </source>
</reference>
<reference key="5">
    <citation type="journal article" date="2004" name="Plant Physiol.">
        <title>A large complement of the predicted Arabidopsis ARM repeat proteins are members of the U-box E3 ubiquitin ligase family.</title>
        <authorList>
            <person name="Mudgil Y."/>
            <person name="Shiu S.-H."/>
            <person name="Stone S.L."/>
            <person name="Salt J.N."/>
            <person name="Goring D.R."/>
        </authorList>
    </citation>
    <scope>GENE FAMILY ORGANIZATION</scope>
</reference>
<gene>
    <name type="primary">PUB41</name>
    <name type="ordered locus">At5g62560</name>
    <name type="ORF">K19B1.17</name>
</gene>
<comment type="function">
    <text evidence="1">Functions as an E3 ubiquitin ligase.</text>
</comment>
<comment type="catalytic activity">
    <reaction>
        <text>S-ubiquitinyl-[E2 ubiquitin-conjugating enzyme]-L-cysteine + [acceptor protein]-L-lysine = [E2 ubiquitin-conjugating enzyme]-L-cysteine + N(6)-ubiquitinyl-[acceptor protein]-L-lysine.</text>
        <dbReference type="EC" id="2.3.2.27"/>
    </reaction>
</comment>
<comment type="pathway">
    <text>Protein modification; protein ubiquitination.</text>
</comment>
<comment type="sequence caution" evidence="3">
    <conflict type="erroneous gene model prediction">
        <sequence resource="EMBL-CDS" id="BAB11506"/>
    </conflict>
</comment>
<sequence>MGGNKQRWFSFHQRSSSATTTTLPQHKHDETPPEFLCPITGFLMSDPVVVSSGQTFERLSVQVCRNLGYIPDLLDGTRPDLSTVIPNLAMKSTIFSWCDRQKVDHPRPPDAAYVEGVVRARMDKDPNPSPGQSPGPGDKDPEPEILPPVEENSPSDYDAVMEAIRARSKNSMSPTTSLESVTIGQSSYHPVRAVSMFSSSTTSSSSGVFAGADSPFRNAMSFSSTDHSSSPMSPEEEEIFNKLRGTDIFDHEQGLILLRKMTRSSEDLRVSLCTDRILSFLRSLLVSRYNLVQTNAAASVVNLSLEKQNKVKIVRSGFVPLLIDVLKSGTTEAQEHVAGALFSLALEDENKMVIGVLGAVEPLLHALRSSESERARQDAALALYHLSLIPSNRTRLVRAGAVPTLLSMVRSGDSTSRILLVLCNLAACPDGKGAMLDGNAVAILVGKLREVGGGDSEAARENCVAVLLTLCQGNLRFRGLASEAGAEEVLMEVEENGNERVKEKASKILLAMRGGGGGESEFGENAEAREWNRMLEATGLSRTQFQGGQNGGFAYSSQF</sequence>
<dbReference type="EC" id="2.3.2.27"/>
<dbReference type="EMBL" id="AB015469">
    <property type="protein sequence ID" value="BAB11506.1"/>
    <property type="status" value="ALT_SEQ"/>
    <property type="molecule type" value="Genomic_DNA"/>
</dbReference>
<dbReference type="EMBL" id="CP002688">
    <property type="protein sequence ID" value="AED97622.1"/>
    <property type="molecule type" value="Genomic_DNA"/>
</dbReference>
<dbReference type="EMBL" id="AY128369">
    <property type="protein sequence ID" value="AAM91572.1"/>
    <property type="molecule type" value="mRNA"/>
</dbReference>
<dbReference type="EMBL" id="BT000351">
    <property type="protein sequence ID" value="AAN15670.1"/>
    <property type="molecule type" value="mRNA"/>
</dbReference>
<dbReference type="EMBL" id="AK227203">
    <property type="protein sequence ID" value="BAE99242.1"/>
    <property type="molecule type" value="mRNA"/>
</dbReference>
<dbReference type="RefSeq" id="NP_201062.1">
    <property type="nucleotide sequence ID" value="NM_125650.4"/>
</dbReference>
<dbReference type="SMR" id="Q0WUF6"/>
<dbReference type="BioGRID" id="21620">
    <property type="interactions" value="1"/>
</dbReference>
<dbReference type="FunCoup" id="Q0WUF6">
    <property type="interactions" value="53"/>
</dbReference>
<dbReference type="STRING" id="3702.Q0WUF6"/>
<dbReference type="iPTMnet" id="Q0WUF6"/>
<dbReference type="PaxDb" id="3702-AT5G62560.1"/>
<dbReference type="ProteomicsDB" id="226109"/>
<dbReference type="EnsemblPlants" id="AT5G62560.1">
    <property type="protein sequence ID" value="AT5G62560.1"/>
    <property type="gene ID" value="AT5G62560"/>
</dbReference>
<dbReference type="GeneID" id="836376"/>
<dbReference type="Gramene" id="AT5G62560.1">
    <property type="protein sequence ID" value="AT5G62560.1"/>
    <property type="gene ID" value="AT5G62560"/>
</dbReference>
<dbReference type="KEGG" id="ath:AT5G62560"/>
<dbReference type="Araport" id="AT5G62560"/>
<dbReference type="TAIR" id="AT5G62560">
    <property type="gene designation" value="PUB41"/>
</dbReference>
<dbReference type="eggNOG" id="ENOG502QPJU">
    <property type="taxonomic scope" value="Eukaryota"/>
</dbReference>
<dbReference type="HOGENOM" id="CLU_006348_7_0_1"/>
<dbReference type="InParanoid" id="Q0WUF6"/>
<dbReference type="OMA" id="ACIQVCA"/>
<dbReference type="OrthoDB" id="7537227at2759"/>
<dbReference type="PhylomeDB" id="Q0WUF6"/>
<dbReference type="UniPathway" id="UPA00143"/>
<dbReference type="PRO" id="PR:Q0WUF6"/>
<dbReference type="Proteomes" id="UP000006548">
    <property type="component" value="Chromosome 5"/>
</dbReference>
<dbReference type="ExpressionAtlas" id="Q0WUF6">
    <property type="expression patterns" value="baseline and differential"/>
</dbReference>
<dbReference type="GO" id="GO:0004842">
    <property type="term" value="F:ubiquitin-protein transferase activity"/>
    <property type="evidence" value="ECO:0007669"/>
    <property type="project" value="InterPro"/>
</dbReference>
<dbReference type="GO" id="GO:0016567">
    <property type="term" value="P:protein ubiquitination"/>
    <property type="evidence" value="ECO:0007669"/>
    <property type="project" value="UniProtKB-UniPathway"/>
</dbReference>
<dbReference type="FunFam" id="1.25.10.10:FF:000814">
    <property type="entry name" value="RING-type E3 ubiquitin transferase"/>
    <property type="match status" value="1"/>
</dbReference>
<dbReference type="FunFam" id="1.25.10.10:FF:001001">
    <property type="entry name" value="RING-type E3 ubiquitin transferase"/>
    <property type="match status" value="1"/>
</dbReference>
<dbReference type="FunFam" id="3.30.40.10:FF:000565">
    <property type="entry name" value="RING-type E3 ubiquitin transferase"/>
    <property type="match status" value="1"/>
</dbReference>
<dbReference type="Gene3D" id="1.25.10.10">
    <property type="entry name" value="Leucine-rich Repeat Variant"/>
    <property type="match status" value="2"/>
</dbReference>
<dbReference type="Gene3D" id="3.30.40.10">
    <property type="entry name" value="Zinc/RING finger domain, C3HC4 (zinc finger)"/>
    <property type="match status" value="1"/>
</dbReference>
<dbReference type="InterPro" id="IPR011989">
    <property type="entry name" value="ARM-like"/>
</dbReference>
<dbReference type="InterPro" id="IPR016024">
    <property type="entry name" value="ARM-type_fold"/>
</dbReference>
<dbReference type="InterPro" id="IPR000225">
    <property type="entry name" value="Armadillo"/>
</dbReference>
<dbReference type="InterPro" id="IPR003613">
    <property type="entry name" value="Ubox_domain"/>
</dbReference>
<dbReference type="InterPro" id="IPR013083">
    <property type="entry name" value="Znf_RING/FYVE/PHD"/>
</dbReference>
<dbReference type="PANTHER" id="PTHR23315">
    <property type="entry name" value="U BOX DOMAIN-CONTAINING"/>
    <property type="match status" value="1"/>
</dbReference>
<dbReference type="PANTHER" id="PTHR23315:SF246">
    <property type="entry name" value="U-BOX DOMAIN-CONTAINING PROTEIN 41"/>
    <property type="match status" value="1"/>
</dbReference>
<dbReference type="Pfam" id="PF00514">
    <property type="entry name" value="Arm"/>
    <property type="match status" value="2"/>
</dbReference>
<dbReference type="Pfam" id="PF04564">
    <property type="entry name" value="U-box"/>
    <property type="match status" value="1"/>
</dbReference>
<dbReference type="SMART" id="SM00185">
    <property type="entry name" value="ARM"/>
    <property type="match status" value="4"/>
</dbReference>
<dbReference type="SMART" id="SM00504">
    <property type="entry name" value="Ubox"/>
    <property type="match status" value="1"/>
</dbReference>
<dbReference type="SUPFAM" id="SSF48371">
    <property type="entry name" value="ARM repeat"/>
    <property type="match status" value="1"/>
</dbReference>
<dbReference type="SUPFAM" id="SSF57850">
    <property type="entry name" value="RING/U-box"/>
    <property type="match status" value="1"/>
</dbReference>
<dbReference type="PROSITE" id="PS50176">
    <property type="entry name" value="ARM_REPEAT"/>
    <property type="match status" value="1"/>
</dbReference>
<dbReference type="PROSITE" id="PS51698">
    <property type="entry name" value="U_BOX"/>
    <property type="match status" value="1"/>
</dbReference>
<keyword id="KW-1185">Reference proteome</keyword>
<keyword id="KW-0677">Repeat</keyword>
<keyword id="KW-0808">Transferase</keyword>
<keyword id="KW-0833">Ubl conjugation pathway</keyword>
<accession>Q0WUF6</accession>
<accession>Q8L7M5</accession>
<accession>Q9FJJ0</accession>